<name>MURB_MYCSS</name>
<proteinExistence type="inferred from homology"/>
<protein>
    <recommendedName>
        <fullName evidence="1">UDP-N-acetylenolpyruvoylglucosamine reductase</fullName>
        <ecNumber evidence="1">1.3.1.98</ecNumber>
    </recommendedName>
    <alternativeName>
        <fullName evidence="1">UDP-N-acetylmuramate dehydrogenase</fullName>
    </alternativeName>
</protein>
<sequence length="350" mass="36674">MTGQELAGAEVEADVALAPLTTLRVGPVARRLITATSTEQLVAALRAPVGRDALILAGGSNVVLADDMSDLTVIRVANSEITVRDGIVRAEAGANWDDVVVTALAHGLGGLECLSGIPGSAGATPVQNVGAYGSEVADTIRRVRLFDRRTGRDDWVTPQDMAFGYRTSVLKHSDHAVVLEVEFALDVGGRSAPLRYGELARALDVEPGGRADPVAVRDAVLALRRGKGMVLDEPDRDTWSVGSFFTNPVVTTAQHERLAAEVDGPVPSYPAPDGVKLAAGWLVEHAGFGKGYPGDDAPARLSTKHALAVTNRGHATTADVIALARTVRDGVRTTFGIELTPEPTLVGCTL</sequence>
<organism>
    <name type="scientific">Mycobacterium sp. (strain MCS)</name>
    <dbReference type="NCBI Taxonomy" id="164756"/>
    <lineage>
        <taxon>Bacteria</taxon>
        <taxon>Bacillati</taxon>
        <taxon>Actinomycetota</taxon>
        <taxon>Actinomycetes</taxon>
        <taxon>Mycobacteriales</taxon>
        <taxon>Mycobacteriaceae</taxon>
        <taxon>Mycobacterium</taxon>
    </lineage>
</organism>
<gene>
    <name evidence="1" type="primary">murB</name>
    <name type="ordered locus">Mmcs_0653</name>
</gene>
<comment type="function">
    <text evidence="1">Cell wall formation.</text>
</comment>
<comment type="catalytic activity">
    <reaction evidence="1">
        <text>UDP-N-acetyl-alpha-D-muramate + NADP(+) = UDP-N-acetyl-3-O-(1-carboxyvinyl)-alpha-D-glucosamine + NADPH + H(+)</text>
        <dbReference type="Rhea" id="RHEA:12248"/>
        <dbReference type="ChEBI" id="CHEBI:15378"/>
        <dbReference type="ChEBI" id="CHEBI:57783"/>
        <dbReference type="ChEBI" id="CHEBI:58349"/>
        <dbReference type="ChEBI" id="CHEBI:68483"/>
        <dbReference type="ChEBI" id="CHEBI:70757"/>
        <dbReference type="EC" id="1.3.1.98"/>
    </reaction>
</comment>
<comment type="cofactor">
    <cofactor evidence="1">
        <name>FAD</name>
        <dbReference type="ChEBI" id="CHEBI:57692"/>
    </cofactor>
</comment>
<comment type="pathway">
    <text evidence="1">Cell wall biogenesis; peptidoglycan biosynthesis.</text>
</comment>
<comment type="subcellular location">
    <subcellularLocation>
        <location evidence="1">Cytoplasm</location>
    </subcellularLocation>
</comment>
<comment type="similarity">
    <text evidence="1">Belongs to the MurB family.</text>
</comment>
<keyword id="KW-0131">Cell cycle</keyword>
<keyword id="KW-0132">Cell division</keyword>
<keyword id="KW-0133">Cell shape</keyword>
<keyword id="KW-0961">Cell wall biogenesis/degradation</keyword>
<keyword id="KW-0963">Cytoplasm</keyword>
<keyword id="KW-0274">FAD</keyword>
<keyword id="KW-0285">Flavoprotein</keyword>
<keyword id="KW-0521">NADP</keyword>
<keyword id="KW-0560">Oxidoreductase</keyword>
<keyword id="KW-0573">Peptidoglycan synthesis</keyword>
<dbReference type="EC" id="1.3.1.98" evidence="1"/>
<dbReference type="EMBL" id="CP000384">
    <property type="protein sequence ID" value="ABG06774.1"/>
    <property type="molecule type" value="Genomic_DNA"/>
</dbReference>
<dbReference type="SMR" id="Q1BEB0"/>
<dbReference type="KEGG" id="mmc:Mmcs_0653"/>
<dbReference type="HOGENOM" id="CLU_035304_0_1_11"/>
<dbReference type="BioCyc" id="MSP164756:G1G6O-667-MONOMER"/>
<dbReference type="UniPathway" id="UPA00219"/>
<dbReference type="GO" id="GO:0005829">
    <property type="term" value="C:cytosol"/>
    <property type="evidence" value="ECO:0007669"/>
    <property type="project" value="TreeGrafter"/>
</dbReference>
<dbReference type="GO" id="GO:0071949">
    <property type="term" value="F:FAD binding"/>
    <property type="evidence" value="ECO:0007669"/>
    <property type="project" value="InterPro"/>
</dbReference>
<dbReference type="GO" id="GO:0008762">
    <property type="term" value="F:UDP-N-acetylmuramate dehydrogenase activity"/>
    <property type="evidence" value="ECO:0007669"/>
    <property type="project" value="UniProtKB-UniRule"/>
</dbReference>
<dbReference type="GO" id="GO:0051301">
    <property type="term" value="P:cell division"/>
    <property type="evidence" value="ECO:0007669"/>
    <property type="project" value="UniProtKB-KW"/>
</dbReference>
<dbReference type="GO" id="GO:0071555">
    <property type="term" value="P:cell wall organization"/>
    <property type="evidence" value="ECO:0007669"/>
    <property type="project" value="UniProtKB-KW"/>
</dbReference>
<dbReference type="GO" id="GO:0009252">
    <property type="term" value="P:peptidoglycan biosynthetic process"/>
    <property type="evidence" value="ECO:0007669"/>
    <property type="project" value="UniProtKB-UniRule"/>
</dbReference>
<dbReference type="GO" id="GO:0008360">
    <property type="term" value="P:regulation of cell shape"/>
    <property type="evidence" value="ECO:0007669"/>
    <property type="project" value="UniProtKB-KW"/>
</dbReference>
<dbReference type="Gene3D" id="3.30.465.10">
    <property type="match status" value="1"/>
</dbReference>
<dbReference type="Gene3D" id="3.90.78.10">
    <property type="entry name" value="UDP-N-acetylenolpyruvoylglucosamine reductase, C-terminal domain"/>
    <property type="match status" value="1"/>
</dbReference>
<dbReference type="Gene3D" id="3.30.43.10">
    <property type="entry name" value="Uridine Diphospho-n-acetylenolpyruvylglucosamine Reductase, domain 2"/>
    <property type="match status" value="1"/>
</dbReference>
<dbReference type="HAMAP" id="MF_00037">
    <property type="entry name" value="MurB"/>
    <property type="match status" value="1"/>
</dbReference>
<dbReference type="InterPro" id="IPR016166">
    <property type="entry name" value="FAD-bd_PCMH"/>
</dbReference>
<dbReference type="InterPro" id="IPR036318">
    <property type="entry name" value="FAD-bd_PCMH-like_sf"/>
</dbReference>
<dbReference type="InterPro" id="IPR016167">
    <property type="entry name" value="FAD-bd_PCMH_sub1"/>
</dbReference>
<dbReference type="InterPro" id="IPR016169">
    <property type="entry name" value="FAD-bd_PCMH_sub2"/>
</dbReference>
<dbReference type="InterPro" id="IPR003170">
    <property type="entry name" value="MurB"/>
</dbReference>
<dbReference type="InterPro" id="IPR011601">
    <property type="entry name" value="MurB_C"/>
</dbReference>
<dbReference type="InterPro" id="IPR036635">
    <property type="entry name" value="MurB_C_sf"/>
</dbReference>
<dbReference type="InterPro" id="IPR006094">
    <property type="entry name" value="Oxid_FAD_bind_N"/>
</dbReference>
<dbReference type="NCBIfam" id="TIGR00179">
    <property type="entry name" value="murB"/>
    <property type="match status" value="1"/>
</dbReference>
<dbReference type="NCBIfam" id="NF010478">
    <property type="entry name" value="PRK13903.1"/>
    <property type="match status" value="1"/>
</dbReference>
<dbReference type="PANTHER" id="PTHR21071">
    <property type="entry name" value="UDP-N-ACETYLENOLPYRUVOYLGLUCOSAMINE REDUCTASE"/>
    <property type="match status" value="1"/>
</dbReference>
<dbReference type="PANTHER" id="PTHR21071:SF4">
    <property type="entry name" value="UDP-N-ACETYLENOLPYRUVOYLGLUCOSAMINE REDUCTASE"/>
    <property type="match status" value="1"/>
</dbReference>
<dbReference type="Pfam" id="PF01565">
    <property type="entry name" value="FAD_binding_4"/>
    <property type="match status" value="1"/>
</dbReference>
<dbReference type="Pfam" id="PF02873">
    <property type="entry name" value="MurB_C"/>
    <property type="match status" value="1"/>
</dbReference>
<dbReference type="SUPFAM" id="SSF56176">
    <property type="entry name" value="FAD-binding/transporter-associated domain-like"/>
    <property type="match status" value="1"/>
</dbReference>
<dbReference type="SUPFAM" id="SSF56194">
    <property type="entry name" value="Uridine diphospho-N-Acetylenolpyruvylglucosamine reductase, MurB, C-terminal domain"/>
    <property type="match status" value="1"/>
</dbReference>
<dbReference type="PROSITE" id="PS51387">
    <property type="entry name" value="FAD_PCMH"/>
    <property type="match status" value="1"/>
</dbReference>
<feature type="chain" id="PRO_0000332477" description="UDP-N-acetylenolpyruvoylglucosamine reductase">
    <location>
        <begin position="1"/>
        <end position="350"/>
    </location>
</feature>
<feature type="domain" description="FAD-binding PCMH-type" evidence="1">
    <location>
        <begin position="25"/>
        <end position="194"/>
    </location>
</feature>
<feature type="active site" evidence="1">
    <location>
        <position position="166"/>
    </location>
</feature>
<feature type="active site" description="Proton donor" evidence="1">
    <location>
        <position position="243"/>
    </location>
</feature>
<feature type="active site" evidence="1">
    <location>
        <position position="342"/>
    </location>
</feature>
<accession>Q1BEB0</accession>
<evidence type="ECO:0000255" key="1">
    <source>
        <dbReference type="HAMAP-Rule" id="MF_00037"/>
    </source>
</evidence>
<reference key="1">
    <citation type="submission" date="2006-06" db="EMBL/GenBank/DDBJ databases">
        <title>Complete sequence of chromosome of Mycobacterium sp. MCS.</title>
        <authorList>
            <consortium name="US DOE Joint Genome Institute"/>
            <person name="Copeland A."/>
            <person name="Lucas S."/>
            <person name="Lapidus A."/>
            <person name="Barry K."/>
            <person name="Detter J.C."/>
            <person name="Glavina del Rio T."/>
            <person name="Hammon N."/>
            <person name="Israni S."/>
            <person name="Dalin E."/>
            <person name="Tice H."/>
            <person name="Pitluck S."/>
            <person name="Martinez M."/>
            <person name="Schmutz J."/>
            <person name="Larimer F."/>
            <person name="Land M."/>
            <person name="Hauser L."/>
            <person name="Kyrpides N."/>
            <person name="Kim E."/>
            <person name="Miller C.D."/>
            <person name="Hughes J.E."/>
            <person name="Anderson A.J."/>
            <person name="Sims R.C."/>
            <person name="Richardson P."/>
        </authorList>
    </citation>
    <scope>NUCLEOTIDE SEQUENCE [LARGE SCALE GENOMIC DNA]</scope>
    <source>
        <strain>MCS</strain>
    </source>
</reference>